<organism>
    <name type="scientific">Saccharomyces cerevisiae (strain ATCC 204508 / S288c)</name>
    <name type="common">Baker's yeast</name>
    <dbReference type="NCBI Taxonomy" id="559292"/>
    <lineage>
        <taxon>Eukaryota</taxon>
        <taxon>Fungi</taxon>
        <taxon>Dikarya</taxon>
        <taxon>Ascomycota</taxon>
        <taxon>Saccharomycotina</taxon>
        <taxon>Saccharomycetes</taxon>
        <taxon>Saccharomycetales</taxon>
        <taxon>Saccharomycetaceae</taxon>
        <taxon>Saccharomyces</taxon>
    </lineage>
</organism>
<keyword id="KW-0002">3D-structure</keyword>
<keyword id="KW-0520">NAD</keyword>
<keyword id="KW-1185">Reference proteome</keyword>
<keyword id="KW-0808">Transferase</keyword>
<keyword id="KW-0819">tRNA processing</keyword>
<gene>
    <name type="primary">TPT1</name>
    <name type="ordered locus">YOL102C</name>
    <name type="ORF">HRE230</name>
</gene>
<dbReference type="EC" id="2.7.1.160" evidence="2"/>
<dbReference type="EMBL" id="Z48149">
    <property type="protein sequence ID" value="CAA88160.1"/>
    <property type="molecule type" value="Genomic_DNA"/>
</dbReference>
<dbReference type="EMBL" id="Z74844">
    <property type="protein sequence ID" value="CAA99116.1"/>
    <property type="molecule type" value="Genomic_DNA"/>
</dbReference>
<dbReference type="EMBL" id="BK006948">
    <property type="protein sequence ID" value="DAA10682.1"/>
    <property type="molecule type" value="Genomic_DNA"/>
</dbReference>
<dbReference type="PIR" id="S51897">
    <property type="entry name" value="S51897"/>
</dbReference>
<dbReference type="RefSeq" id="NP_014539.1">
    <property type="nucleotide sequence ID" value="NM_001183356.1"/>
</dbReference>
<dbReference type="PDB" id="7YW4">
    <property type="method" value="X-ray"/>
    <property type="resolution" value="2.18 A"/>
    <property type="chains" value="A=1-230"/>
</dbReference>
<dbReference type="PDBsum" id="7YW4"/>
<dbReference type="SMR" id="Q12272"/>
<dbReference type="BioGRID" id="34301">
    <property type="interactions" value="237"/>
</dbReference>
<dbReference type="DIP" id="DIP-2571N"/>
<dbReference type="FunCoup" id="Q12272">
    <property type="interactions" value="268"/>
</dbReference>
<dbReference type="IntAct" id="Q12272">
    <property type="interactions" value="6"/>
</dbReference>
<dbReference type="MINT" id="Q12272"/>
<dbReference type="STRING" id="4932.YOL102C"/>
<dbReference type="iPTMnet" id="Q12272"/>
<dbReference type="PaxDb" id="4932-YOL102C"/>
<dbReference type="PeptideAtlas" id="Q12272"/>
<dbReference type="EnsemblFungi" id="YOL102C_mRNA">
    <property type="protein sequence ID" value="YOL102C"/>
    <property type="gene ID" value="YOL102C"/>
</dbReference>
<dbReference type="GeneID" id="854051"/>
<dbReference type="KEGG" id="sce:YOL102C"/>
<dbReference type="AGR" id="SGD:S000005462"/>
<dbReference type="SGD" id="S000005462">
    <property type="gene designation" value="TPT1"/>
</dbReference>
<dbReference type="VEuPathDB" id="FungiDB:YOL102C"/>
<dbReference type="eggNOG" id="KOG2278">
    <property type="taxonomic scope" value="Eukaryota"/>
</dbReference>
<dbReference type="GeneTree" id="ENSGT00390000002731"/>
<dbReference type="HOGENOM" id="CLU_052998_1_1_1"/>
<dbReference type="InParanoid" id="Q12272"/>
<dbReference type="OMA" id="RHGASQM"/>
<dbReference type="OrthoDB" id="419694at2759"/>
<dbReference type="BioCyc" id="MetaCyc:G3O-33500-MONOMER"/>
<dbReference type="BioCyc" id="YEAST:G3O-33500-MONOMER"/>
<dbReference type="BRENDA" id="2.7.1.160">
    <property type="organism ID" value="984"/>
</dbReference>
<dbReference type="BioGRID-ORCS" id="854051">
    <property type="hits" value="2 hits in 10 CRISPR screens"/>
</dbReference>
<dbReference type="CD-CODE" id="E03F929F">
    <property type="entry name" value="Stress granule"/>
</dbReference>
<dbReference type="PRO" id="PR:Q12272"/>
<dbReference type="Proteomes" id="UP000002311">
    <property type="component" value="Chromosome XV"/>
</dbReference>
<dbReference type="RNAct" id="Q12272">
    <property type="molecule type" value="protein"/>
</dbReference>
<dbReference type="GO" id="GO:0005737">
    <property type="term" value="C:cytoplasm"/>
    <property type="evidence" value="ECO:0000314"/>
    <property type="project" value="SGD"/>
</dbReference>
<dbReference type="GO" id="GO:0005634">
    <property type="term" value="C:nucleus"/>
    <property type="evidence" value="ECO:0000314"/>
    <property type="project" value="SGD"/>
</dbReference>
<dbReference type="GO" id="GO:0000215">
    <property type="term" value="F:tRNA 2'-phosphotransferase activity"/>
    <property type="evidence" value="ECO:0000314"/>
    <property type="project" value="SGD"/>
</dbReference>
<dbReference type="GO" id="GO:0006388">
    <property type="term" value="P:tRNA splicing, via endonucleolytic cleavage and ligation"/>
    <property type="evidence" value="ECO:0000314"/>
    <property type="project" value="SGD"/>
</dbReference>
<dbReference type="FunFam" id="3.20.170.30:FF:000002">
    <property type="entry name" value="Phosphotransferase, putative"/>
    <property type="match status" value="1"/>
</dbReference>
<dbReference type="FunFam" id="1.10.10.970:FF:000002">
    <property type="entry name" value="Tpt1p"/>
    <property type="match status" value="1"/>
</dbReference>
<dbReference type="Gene3D" id="3.20.170.30">
    <property type="match status" value="1"/>
</dbReference>
<dbReference type="Gene3D" id="1.10.10.970">
    <property type="entry name" value="RNA 2'-phosphotransferase, Tpt1/KptA family, N-terminal domain"/>
    <property type="match status" value="1"/>
</dbReference>
<dbReference type="InterPro" id="IPR002745">
    <property type="entry name" value="Ptrans_KptA/Tpt1"/>
</dbReference>
<dbReference type="InterPro" id="IPR042081">
    <property type="entry name" value="RNA_2'-PTrans_C"/>
</dbReference>
<dbReference type="InterPro" id="IPR042080">
    <property type="entry name" value="RNA_2'-PTrans_N"/>
</dbReference>
<dbReference type="PANTHER" id="PTHR12684">
    <property type="entry name" value="PUTATIVE PHOSPHOTRANSFERASE"/>
    <property type="match status" value="1"/>
</dbReference>
<dbReference type="PANTHER" id="PTHR12684:SF2">
    <property type="entry name" value="TRNA 2'-PHOSPHOTRANSFERASE 1"/>
    <property type="match status" value="1"/>
</dbReference>
<dbReference type="Pfam" id="PF01885">
    <property type="entry name" value="PTS_2-RNA"/>
    <property type="match status" value="1"/>
</dbReference>
<dbReference type="SUPFAM" id="SSF56399">
    <property type="entry name" value="ADP-ribosylation"/>
    <property type="match status" value="1"/>
</dbReference>
<sequence length="230" mass="26196">MRQVLQKDKRDVQLSKALSYLLRHTAVKEKLTIDSNGYTPLKELLSHNRLKTHKCTVDDIHRIVKENDKQRFHIKTLGADEEWICATQGHSIKSIQPSDEVLVPITEASQLPQELIHGTNLQSVIKIIESGAISPMSRNHVHLSPGMLHAKGVISGMRSSSNVYIFIDCHSPLFFQTLKMFRSLNNVYLSSSIPVELIQKVVVKGNLKDEEKLDTLRRILHERNIPLEKI</sequence>
<accession>Q12272</accession>
<accession>D6W1W6</accession>
<reference key="1">
    <citation type="journal article" date="1995" name="Yeast">
        <title>Sequence analysis of a 44 kb DNA fragment of yeast chromosome XV including the Ty1-H3 retrotransposon, the suf1(+) frameshift suppressor gene for tRNA-Gly, the yeast transfer RNA-Thr-1a and a delta element.</title>
        <authorList>
            <person name="Vandenbol M."/>
            <person name="Durand P."/>
            <person name="Portetelle D."/>
            <person name="Hilger F."/>
        </authorList>
    </citation>
    <scope>NUCLEOTIDE SEQUENCE [GENOMIC DNA]</scope>
</reference>
<reference key="2">
    <citation type="journal article" date="1997" name="Nature">
        <title>The nucleotide sequence of Saccharomyces cerevisiae chromosome XV.</title>
        <authorList>
            <person name="Dujon B."/>
            <person name="Albermann K."/>
            <person name="Aldea M."/>
            <person name="Alexandraki D."/>
            <person name="Ansorge W."/>
            <person name="Arino J."/>
            <person name="Benes V."/>
            <person name="Bohn C."/>
            <person name="Bolotin-Fukuhara M."/>
            <person name="Bordonne R."/>
            <person name="Boyer J."/>
            <person name="Camasses A."/>
            <person name="Casamayor A."/>
            <person name="Casas C."/>
            <person name="Cheret G."/>
            <person name="Cziepluch C."/>
            <person name="Daignan-Fornier B."/>
            <person name="Dang V.-D."/>
            <person name="de Haan M."/>
            <person name="Delius H."/>
            <person name="Durand P."/>
            <person name="Fairhead C."/>
            <person name="Feldmann H."/>
            <person name="Gaillon L."/>
            <person name="Galisson F."/>
            <person name="Gamo F.-J."/>
            <person name="Gancedo C."/>
            <person name="Goffeau A."/>
            <person name="Goulding S.E."/>
            <person name="Grivell L.A."/>
            <person name="Habbig B."/>
            <person name="Hand N.J."/>
            <person name="Hani J."/>
            <person name="Hattenhorst U."/>
            <person name="Hebling U."/>
            <person name="Hernando Y."/>
            <person name="Herrero E."/>
            <person name="Heumann K."/>
            <person name="Hiesel R."/>
            <person name="Hilger F."/>
            <person name="Hofmann B."/>
            <person name="Hollenberg C.P."/>
            <person name="Hughes B."/>
            <person name="Jauniaux J.-C."/>
            <person name="Kalogeropoulos A."/>
            <person name="Katsoulou C."/>
            <person name="Kordes E."/>
            <person name="Lafuente M.J."/>
            <person name="Landt O."/>
            <person name="Louis E.J."/>
            <person name="Maarse A.C."/>
            <person name="Madania A."/>
            <person name="Mannhaupt G."/>
            <person name="Marck C."/>
            <person name="Martin R.P."/>
            <person name="Mewes H.-W."/>
            <person name="Michaux G."/>
            <person name="Paces V."/>
            <person name="Parle-McDermott A.G."/>
            <person name="Pearson B.M."/>
            <person name="Perrin A."/>
            <person name="Pettersson B."/>
            <person name="Poch O."/>
            <person name="Pohl T.M."/>
            <person name="Poirey R."/>
            <person name="Portetelle D."/>
            <person name="Pujol A."/>
            <person name="Purnelle B."/>
            <person name="Ramezani Rad M."/>
            <person name="Rechmann S."/>
            <person name="Schwager C."/>
            <person name="Schweizer M."/>
            <person name="Sor F."/>
            <person name="Sterky F."/>
            <person name="Tarassov I.A."/>
            <person name="Teodoru C."/>
            <person name="Tettelin H."/>
            <person name="Thierry A."/>
            <person name="Tobiasch E."/>
            <person name="Tzermia M."/>
            <person name="Uhlen M."/>
            <person name="Unseld M."/>
            <person name="Valens M."/>
            <person name="Vandenbol M."/>
            <person name="Vetter I."/>
            <person name="Vlcek C."/>
            <person name="Voet M."/>
            <person name="Volckaert G."/>
            <person name="Voss H."/>
            <person name="Wambutt R."/>
            <person name="Wedler H."/>
            <person name="Wiemann S."/>
            <person name="Winsor B."/>
            <person name="Wolfe K.H."/>
            <person name="Zollner A."/>
            <person name="Zumstein E."/>
            <person name="Kleine K."/>
        </authorList>
    </citation>
    <scope>NUCLEOTIDE SEQUENCE [LARGE SCALE GENOMIC DNA]</scope>
    <source>
        <strain>ATCC 204508 / S288c</strain>
    </source>
</reference>
<reference key="3">
    <citation type="journal article" date="2014" name="G3 (Bethesda)">
        <title>The reference genome sequence of Saccharomyces cerevisiae: Then and now.</title>
        <authorList>
            <person name="Engel S.R."/>
            <person name="Dietrich F.S."/>
            <person name="Fisk D.G."/>
            <person name="Binkley G."/>
            <person name="Balakrishnan R."/>
            <person name="Costanzo M.C."/>
            <person name="Dwight S.S."/>
            <person name="Hitz B.C."/>
            <person name="Karra K."/>
            <person name="Nash R.S."/>
            <person name="Weng S."/>
            <person name="Wong E.D."/>
            <person name="Lloyd P."/>
            <person name="Skrzypek M.S."/>
            <person name="Miyasato S.R."/>
            <person name="Simison M."/>
            <person name="Cherry J.M."/>
        </authorList>
    </citation>
    <scope>GENOME REANNOTATION</scope>
    <source>
        <strain>ATCC 204508 / S288c</strain>
    </source>
</reference>
<reference key="4">
    <citation type="journal article" date="1997" name="J. Biol. Chem.">
        <title>A 2'-phosphotransferase implicated in tRNA splicing is essential in Saccharomyces cerevisiae.</title>
        <authorList>
            <person name="Culver G.M."/>
            <person name="McCraith S.M."/>
            <person name="Consaul S.A."/>
            <person name="Stanford D.R."/>
            <person name="Phizicky E.M."/>
        </authorList>
    </citation>
    <scope>FUNCTION</scope>
    <scope>CATALYTIC ACTIVITY</scope>
</reference>
<reference key="5">
    <citation type="journal article" date="1999" name="J. Biol. Chem.">
        <title>Transient ADP-ribosylation of a 2'-phosphate implicated in its removal from ligated tRNA during splicing in yeast.</title>
        <authorList>
            <person name="Spinelli S.L."/>
            <person name="Kierzek R."/>
            <person name="Turner D.H."/>
            <person name="Phizicky E.M."/>
        </authorList>
    </citation>
    <scope>CHARACTERIZATION</scope>
</reference>
<reference key="6">
    <citation type="journal article" date="2003" name="Nature">
        <title>Global analysis of protein expression in yeast.</title>
        <authorList>
            <person name="Ghaemmaghami S."/>
            <person name="Huh W.-K."/>
            <person name="Bower K."/>
            <person name="Howson R.W."/>
            <person name="Belle A."/>
            <person name="Dephoure N."/>
            <person name="O'Shea E.K."/>
            <person name="Weissman J.S."/>
        </authorList>
    </citation>
    <scope>LEVEL OF PROTEIN EXPRESSION [LARGE SCALE ANALYSIS]</scope>
</reference>
<proteinExistence type="evidence at protein level"/>
<evidence type="ECO:0000269" key="1">
    <source>
    </source>
</evidence>
<evidence type="ECO:0000269" key="2">
    <source>
    </source>
</evidence>
<evidence type="ECO:0000305" key="3"/>
<evidence type="ECO:0007829" key="4">
    <source>
        <dbReference type="PDB" id="7YW4"/>
    </source>
</evidence>
<protein>
    <recommendedName>
        <fullName>tRNA 2'-phosphotransferase</fullName>
        <ecNumber evidence="2">2.7.1.160</ecNumber>
    </recommendedName>
</protein>
<feature type="chain" id="PRO_0000157497" description="tRNA 2'-phosphotransferase">
    <location>
        <begin position="1"/>
        <end position="230"/>
    </location>
</feature>
<feature type="strand" evidence="4">
    <location>
        <begin position="102"/>
        <end position="105"/>
    </location>
</feature>
<feature type="helix" evidence="4">
    <location>
        <begin position="108"/>
        <end position="110"/>
    </location>
</feature>
<feature type="strand" evidence="4">
    <location>
        <begin position="113"/>
        <end position="119"/>
    </location>
</feature>
<feature type="helix" evidence="4">
    <location>
        <begin position="121"/>
        <end position="130"/>
    </location>
</feature>
<feature type="strand" evidence="4">
    <location>
        <begin position="138"/>
        <end position="146"/>
    </location>
</feature>
<feature type="strand" evidence="4">
    <location>
        <begin position="163"/>
        <end position="167"/>
    </location>
</feature>
<feature type="helix" evidence="4">
    <location>
        <begin position="174"/>
        <end position="177"/>
    </location>
</feature>
<feature type="strand" evidence="4">
    <location>
        <begin position="180"/>
        <end position="183"/>
    </location>
</feature>
<feature type="strand" evidence="4">
    <location>
        <begin position="188"/>
        <end position="191"/>
    </location>
</feature>
<feature type="helix" evidence="4">
    <location>
        <begin position="195"/>
        <end position="197"/>
    </location>
</feature>
<feature type="strand" evidence="4">
    <location>
        <begin position="198"/>
        <end position="203"/>
    </location>
</feature>
<feature type="helix" evidence="4">
    <location>
        <begin position="207"/>
        <end position="209"/>
    </location>
</feature>
<feature type="helix" evidence="4">
    <location>
        <begin position="210"/>
        <end position="222"/>
    </location>
</feature>
<feature type="strand" evidence="4">
    <location>
        <begin position="227"/>
        <end position="229"/>
    </location>
</feature>
<comment type="function">
    <text evidence="2">Catalyzes the last step of tRNA splicing, the transfer of the splice junction 2'-phosphate from ligated tRNA to NAD to produce ADP-ribose 1''-2'' cyclic phosphate.</text>
</comment>
<comment type="catalytic activity">
    <reaction evidence="2">
        <text>2'-phospho-[ligated tRNA] + NAD(+) = mature tRNA + ADP-alpha-D-ribose 1'',2''-cyclic phosphate + nicotinamide</text>
        <dbReference type="Rhea" id="RHEA:23324"/>
        <dbReference type="Rhea" id="RHEA-COMP:11106"/>
        <dbReference type="Rhea" id="RHEA-COMP:11107"/>
        <dbReference type="ChEBI" id="CHEBI:17154"/>
        <dbReference type="ChEBI" id="CHEBI:57540"/>
        <dbReference type="ChEBI" id="CHEBI:76596"/>
        <dbReference type="ChEBI" id="CHEBI:82883"/>
        <dbReference type="ChEBI" id="CHEBI:85027"/>
        <dbReference type="EC" id="2.7.1.160"/>
    </reaction>
</comment>
<comment type="miscellaneous">
    <text evidence="1">Present with 672 molecules/cell in log phase SD medium.</text>
</comment>
<comment type="similarity">
    <text evidence="3">Belongs to the KptA/TPT1 family.</text>
</comment>
<name>TPT1_YEAST</name>